<protein>
    <recommendedName>
        <fullName evidence="1">Putative mercuric resistance protein</fullName>
    </recommendedName>
</protein>
<reference key="1">
    <citation type="journal article" date="1984" name="Proc. Natl. Acad. Sci. U.S.A.">
        <title>Mercuric ion-resistance operons of plasmid R100 and transposon Tn501: the beginning of the operon including the regulatory region and the first two structural genes.</title>
        <authorList>
            <person name="Misra T.K."/>
            <person name="Brown N.L."/>
            <person name="Fritzinger D.C."/>
            <person name="Pridmore R.D."/>
            <person name="Barnes W.M."/>
            <person name="Haberstroh L."/>
            <person name="Silver S."/>
        </authorList>
    </citation>
    <scope>NUCLEOTIDE SEQUENCE [GENOMIC DNA]</scope>
</reference>
<reference key="2">
    <citation type="journal article" date="1984" name="J. Mol. Appl. Genet.">
        <title>The DNA sequence of the mercury resistance operon of the IncFII plasmid NR1.</title>
        <authorList>
            <person name="Barrineau P."/>
            <person name="Gilbert P."/>
            <person name="Jackson W.J."/>
            <person name="Jones C.S."/>
            <person name="Summers A.O."/>
            <person name="Wisdom S."/>
        </authorList>
    </citation>
    <scope>NUCLEOTIDE SEQUENCE [GENOMIC DNA]</scope>
    <source>
        <transposon>Tn21</transposon>
    </source>
</reference>
<keyword id="KW-0475">Mercuric resistance</keyword>
<keyword id="KW-0614">Plasmid</keyword>
<keyword id="KW-0814">Transposable element</keyword>
<comment type="miscellaneous">
    <text evidence="1">Part of the mercury resistance operon (mer).</text>
</comment>
<dbReference type="EMBL" id="J01730">
    <property type="protein sequence ID" value="AAA92260.1"/>
    <property type="molecule type" value="Genomic_DNA"/>
</dbReference>
<dbReference type="EMBL" id="K03089">
    <property type="protein sequence ID" value="AAB59074.1"/>
    <property type="molecule type" value="Genomic_DNA"/>
</dbReference>
<dbReference type="PIR" id="A04460">
    <property type="entry name" value="QQEBHC"/>
</dbReference>
<dbReference type="GO" id="GO:0046689">
    <property type="term" value="P:response to mercury ion"/>
    <property type="evidence" value="ECO:0007669"/>
    <property type="project" value="UniProtKB-KW"/>
</dbReference>
<geneLocation type="plasmid">
    <name>IncFII R100</name>
    <name>NR1</name>
</geneLocation>
<accession>P04337</accession>
<name>MER_SHIFL</name>
<evidence type="ECO:0000305" key="1"/>
<proteinExistence type="predicted"/>
<sequence>MRAKSAIFSRTSLSLCSARLLASSQWVPSSSRNSSAISSRLNPSRCADFTNFTRTTSASP</sequence>
<organism>
    <name type="scientific">Shigella flexneri</name>
    <dbReference type="NCBI Taxonomy" id="623"/>
    <lineage>
        <taxon>Bacteria</taxon>
        <taxon>Pseudomonadati</taxon>
        <taxon>Pseudomonadota</taxon>
        <taxon>Gammaproteobacteria</taxon>
        <taxon>Enterobacterales</taxon>
        <taxon>Enterobacteriaceae</taxon>
        <taxon>Shigella</taxon>
    </lineage>
</organism>
<feature type="chain" id="PRO_0000096424" description="Putative mercuric resistance protein">
    <location>
        <begin position="1"/>
        <end position="60"/>
    </location>
</feature>